<evidence type="ECO:0000256" key="1">
    <source>
        <dbReference type="SAM" id="MobiDB-lite"/>
    </source>
</evidence>
<evidence type="ECO:0000305" key="2"/>
<reference key="1">
    <citation type="journal article" date="2003" name="Proc. Natl. Acad. Sci. U.S.A.">
        <title>The complete genome sequence of Mycobacterium bovis.</title>
        <authorList>
            <person name="Garnier T."/>
            <person name="Eiglmeier K."/>
            <person name="Camus J.-C."/>
            <person name="Medina N."/>
            <person name="Mansoor H."/>
            <person name="Pryor M."/>
            <person name="Duthoy S."/>
            <person name="Grondin S."/>
            <person name="Lacroix C."/>
            <person name="Monsempe C."/>
            <person name="Simon S."/>
            <person name="Harris B."/>
            <person name="Atkin R."/>
            <person name="Doggett J."/>
            <person name="Mayes R."/>
            <person name="Keating L."/>
            <person name="Wheeler P.R."/>
            <person name="Parkhill J."/>
            <person name="Barrell B.G."/>
            <person name="Cole S.T."/>
            <person name="Gordon S.V."/>
            <person name="Hewinson R.G."/>
        </authorList>
    </citation>
    <scope>NUCLEOTIDE SEQUENCE [LARGE SCALE GENOMIC DNA]</scope>
    <source>
        <strain>ATCC BAA-935 / AF2122/97</strain>
    </source>
</reference>
<reference key="2">
    <citation type="journal article" date="2017" name="Genome Announc.">
        <title>Updated reference genome sequence and annotation of Mycobacterium bovis AF2122/97.</title>
        <authorList>
            <person name="Malone K.M."/>
            <person name="Farrell D."/>
            <person name="Stuber T.P."/>
            <person name="Schubert O.T."/>
            <person name="Aebersold R."/>
            <person name="Robbe-Austerman S."/>
            <person name="Gordon S.V."/>
        </authorList>
    </citation>
    <scope>NUCLEOTIDE SEQUENCE [LARGE SCALE GENOMIC DNA]</scope>
    <scope>GENOME REANNOTATION</scope>
    <source>
        <strain>ATCC BAA-935 / AF2122/97</strain>
    </source>
</reference>
<gene>
    <name type="primary">rpsI</name>
    <name type="ordered locus">BQ2027_MB3472C</name>
</gene>
<dbReference type="EMBL" id="LT708304">
    <property type="protein sequence ID" value="SIU02100.1"/>
    <property type="molecule type" value="Genomic_DNA"/>
</dbReference>
<dbReference type="RefSeq" id="NP_857112.1">
    <property type="nucleotide sequence ID" value="NC_002945.3"/>
</dbReference>
<dbReference type="RefSeq" id="WP_003418308.1">
    <property type="nucleotide sequence ID" value="NC_002945.4"/>
</dbReference>
<dbReference type="SMR" id="P66640"/>
<dbReference type="GeneID" id="45427432"/>
<dbReference type="KEGG" id="mbo:BQ2027_MB3472C"/>
<dbReference type="PATRIC" id="fig|233413.5.peg.3809"/>
<dbReference type="Proteomes" id="UP000001419">
    <property type="component" value="Chromosome"/>
</dbReference>
<dbReference type="GO" id="GO:0005737">
    <property type="term" value="C:cytoplasm"/>
    <property type="evidence" value="ECO:0007669"/>
    <property type="project" value="UniProtKB-ARBA"/>
</dbReference>
<dbReference type="GO" id="GO:0015935">
    <property type="term" value="C:small ribosomal subunit"/>
    <property type="evidence" value="ECO:0007669"/>
    <property type="project" value="TreeGrafter"/>
</dbReference>
<dbReference type="GO" id="GO:0003723">
    <property type="term" value="F:RNA binding"/>
    <property type="evidence" value="ECO:0007669"/>
    <property type="project" value="TreeGrafter"/>
</dbReference>
<dbReference type="GO" id="GO:0003735">
    <property type="term" value="F:structural constituent of ribosome"/>
    <property type="evidence" value="ECO:0007669"/>
    <property type="project" value="InterPro"/>
</dbReference>
<dbReference type="GO" id="GO:0006412">
    <property type="term" value="P:translation"/>
    <property type="evidence" value="ECO:0007669"/>
    <property type="project" value="UniProtKB-UniRule"/>
</dbReference>
<dbReference type="FunFam" id="3.30.230.10:FF:000001">
    <property type="entry name" value="30S ribosomal protein S9"/>
    <property type="match status" value="1"/>
</dbReference>
<dbReference type="Gene3D" id="3.30.230.10">
    <property type="match status" value="1"/>
</dbReference>
<dbReference type="HAMAP" id="MF_00532_B">
    <property type="entry name" value="Ribosomal_uS9_B"/>
    <property type="match status" value="1"/>
</dbReference>
<dbReference type="InterPro" id="IPR020568">
    <property type="entry name" value="Ribosomal_Su5_D2-typ_SF"/>
</dbReference>
<dbReference type="InterPro" id="IPR000754">
    <property type="entry name" value="Ribosomal_uS9"/>
</dbReference>
<dbReference type="InterPro" id="IPR023035">
    <property type="entry name" value="Ribosomal_uS9_bac/plastid"/>
</dbReference>
<dbReference type="InterPro" id="IPR020574">
    <property type="entry name" value="Ribosomal_uS9_CS"/>
</dbReference>
<dbReference type="InterPro" id="IPR014721">
    <property type="entry name" value="Ribsml_uS5_D2-typ_fold_subgr"/>
</dbReference>
<dbReference type="NCBIfam" id="NF001099">
    <property type="entry name" value="PRK00132.1"/>
    <property type="match status" value="1"/>
</dbReference>
<dbReference type="PANTHER" id="PTHR21569">
    <property type="entry name" value="RIBOSOMAL PROTEIN S9"/>
    <property type="match status" value="1"/>
</dbReference>
<dbReference type="PANTHER" id="PTHR21569:SF1">
    <property type="entry name" value="SMALL RIBOSOMAL SUBUNIT PROTEIN US9M"/>
    <property type="match status" value="1"/>
</dbReference>
<dbReference type="Pfam" id="PF00380">
    <property type="entry name" value="Ribosomal_S9"/>
    <property type="match status" value="1"/>
</dbReference>
<dbReference type="SUPFAM" id="SSF54211">
    <property type="entry name" value="Ribosomal protein S5 domain 2-like"/>
    <property type="match status" value="1"/>
</dbReference>
<dbReference type="PROSITE" id="PS00360">
    <property type="entry name" value="RIBOSOMAL_S9"/>
    <property type="match status" value="1"/>
</dbReference>
<feature type="chain" id="PRO_0000111380" description="Small ribosomal subunit protein uS9">
    <location>
        <begin position="1"/>
        <end position="151"/>
    </location>
</feature>
<feature type="region of interest" description="Disordered" evidence="1">
    <location>
        <begin position="1"/>
        <end position="20"/>
    </location>
</feature>
<feature type="region of interest" description="Disordered" evidence="1">
    <location>
        <begin position="121"/>
        <end position="151"/>
    </location>
</feature>
<feature type="compositionally biased region" description="Low complexity" evidence="1">
    <location>
        <begin position="1"/>
        <end position="19"/>
    </location>
</feature>
<feature type="compositionally biased region" description="Basic and acidic residues" evidence="1">
    <location>
        <begin position="127"/>
        <end position="136"/>
    </location>
</feature>
<feature type="compositionally biased region" description="Basic residues" evidence="1">
    <location>
        <begin position="137"/>
        <end position="151"/>
    </location>
</feature>
<proteinExistence type="inferred from homology"/>
<sequence>MTETTPAPQTPAAPAGPAQSFVLERPIQTVGRRKEAVVRVRLVPGTGKFDLNGRSLEDYFPNKVHQQLIKAPLVTVDRVESFDIFAHLGGGGPSGQAGALRLGIARALILVSPEDRPALKKAGFLTRDPRATERKKYGLKKARKAPQYSKR</sequence>
<accession>P66640</accession>
<accession>A0A1R3Y464</accession>
<accession>O06259</accession>
<accession>X2BNU0</accession>
<organism>
    <name type="scientific">Mycobacterium bovis (strain ATCC BAA-935 / AF2122/97)</name>
    <dbReference type="NCBI Taxonomy" id="233413"/>
    <lineage>
        <taxon>Bacteria</taxon>
        <taxon>Bacillati</taxon>
        <taxon>Actinomycetota</taxon>
        <taxon>Actinomycetes</taxon>
        <taxon>Mycobacteriales</taxon>
        <taxon>Mycobacteriaceae</taxon>
        <taxon>Mycobacterium</taxon>
        <taxon>Mycobacterium tuberculosis complex</taxon>
    </lineage>
</organism>
<protein>
    <recommendedName>
        <fullName evidence="2">Small ribosomal subunit protein uS9</fullName>
    </recommendedName>
    <alternativeName>
        <fullName>30S ribosomal protein S9</fullName>
    </alternativeName>
</protein>
<name>RS9_MYCBO</name>
<comment type="similarity">
    <text evidence="2">Belongs to the universal ribosomal protein uS9 family.</text>
</comment>
<keyword id="KW-1185">Reference proteome</keyword>
<keyword id="KW-0687">Ribonucleoprotein</keyword>
<keyword id="KW-0689">Ribosomal protein</keyword>